<protein>
    <recommendedName>
        <fullName evidence="1">DNA-directed RNA polymerase subunit omega</fullName>
        <shortName evidence="1">RNAP omega subunit</shortName>
        <ecNumber evidence="1">2.7.7.6</ecNumber>
    </recommendedName>
    <alternativeName>
        <fullName evidence="1">RNA polymerase omega subunit</fullName>
    </alternativeName>
    <alternativeName>
        <fullName evidence="1">Transcriptase subunit omega</fullName>
    </alternativeName>
</protein>
<gene>
    <name evidence="1" type="primary">rpoZ</name>
    <name type="ordered locus">CJJ81176_1289</name>
</gene>
<sequence>MDKRIEEVAAKALEKMGNDRYRLSLVVAKRAEQLANGATPLVDFDKNKNKLADIALYEIAENKITLEGLVETNR</sequence>
<accession>A1W0Q8</accession>
<evidence type="ECO:0000255" key="1">
    <source>
        <dbReference type="HAMAP-Rule" id="MF_00366"/>
    </source>
</evidence>
<proteinExistence type="inferred from homology"/>
<name>RPOZ_CAMJJ</name>
<feature type="chain" id="PRO_1000005907" description="DNA-directed RNA polymerase subunit omega">
    <location>
        <begin position="1"/>
        <end position="74"/>
    </location>
</feature>
<keyword id="KW-0240">DNA-directed RNA polymerase</keyword>
<keyword id="KW-0548">Nucleotidyltransferase</keyword>
<keyword id="KW-0804">Transcription</keyword>
<keyword id="KW-0808">Transferase</keyword>
<organism>
    <name type="scientific">Campylobacter jejuni subsp. jejuni serotype O:23/36 (strain 81-176)</name>
    <dbReference type="NCBI Taxonomy" id="354242"/>
    <lineage>
        <taxon>Bacteria</taxon>
        <taxon>Pseudomonadati</taxon>
        <taxon>Campylobacterota</taxon>
        <taxon>Epsilonproteobacteria</taxon>
        <taxon>Campylobacterales</taxon>
        <taxon>Campylobacteraceae</taxon>
        <taxon>Campylobacter</taxon>
    </lineage>
</organism>
<comment type="function">
    <text evidence="1">Promotes RNA polymerase assembly. Latches the N- and C-terminal regions of the beta' subunit thereby facilitating its interaction with the beta and alpha subunits.</text>
</comment>
<comment type="catalytic activity">
    <reaction evidence="1">
        <text>RNA(n) + a ribonucleoside 5'-triphosphate = RNA(n+1) + diphosphate</text>
        <dbReference type="Rhea" id="RHEA:21248"/>
        <dbReference type="Rhea" id="RHEA-COMP:14527"/>
        <dbReference type="Rhea" id="RHEA-COMP:17342"/>
        <dbReference type="ChEBI" id="CHEBI:33019"/>
        <dbReference type="ChEBI" id="CHEBI:61557"/>
        <dbReference type="ChEBI" id="CHEBI:140395"/>
        <dbReference type="EC" id="2.7.7.6"/>
    </reaction>
</comment>
<comment type="subunit">
    <text evidence="1">The RNAP catalytic core consists of 2 alpha, 1 beta, 1 beta' and 1 omega subunit. When a sigma factor is associated with the core the holoenzyme is formed, which can initiate transcription.</text>
</comment>
<comment type="similarity">
    <text evidence="1">Belongs to the RNA polymerase subunit omega family.</text>
</comment>
<reference key="1">
    <citation type="submission" date="2006-12" db="EMBL/GenBank/DDBJ databases">
        <authorList>
            <person name="Fouts D.E."/>
            <person name="Nelson K.E."/>
            <person name="Sebastian Y."/>
        </authorList>
    </citation>
    <scope>NUCLEOTIDE SEQUENCE [LARGE SCALE GENOMIC DNA]</scope>
    <source>
        <strain>81-176</strain>
    </source>
</reference>
<dbReference type="EC" id="2.7.7.6" evidence="1"/>
<dbReference type="EMBL" id="CP000538">
    <property type="protein sequence ID" value="EAQ72514.1"/>
    <property type="molecule type" value="Genomic_DNA"/>
</dbReference>
<dbReference type="RefSeq" id="WP_002853464.1">
    <property type="nucleotide sequence ID" value="NC_008787.1"/>
</dbReference>
<dbReference type="SMR" id="A1W0Q8"/>
<dbReference type="KEGG" id="cjj:CJJ81176_1289"/>
<dbReference type="eggNOG" id="COG1758">
    <property type="taxonomic scope" value="Bacteria"/>
</dbReference>
<dbReference type="HOGENOM" id="CLU_125406_3_0_7"/>
<dbReference type="Proteomes" id="UP000000646">
    <property type="component" value="Chromosome"/>
</dbReference>
<dbReference type="GO" id="GO:0000428">
    <property type="term" value="C:DNA-directed RNA polymerase complex"/>
    <property type="evidence" value="ECO:0007669"/>
    <property type="project" value="UniProtKB-KW"/>
</dbReference>
<dbReference type="GO" id="GO:0003677">
    <property type="term" value="F:DNA binding"/>
    <property type="evidence" value="ECO:0007669"/>
    <property type="project" value="UniProtKB-UniRule"/>
</dbReference>
<dbReference type="GO" id="GO:0003899">
    <property type="term" value="F:DNA-directed RNA polymerase activity"/>
    <property type="evidence" value="ECO:0007669"/>
    <property type="project" value="UniProtKB-UniRule"/>
</dbReference>
<dbReference type="GO" id="GO:0006351">
    <property type="term" value="P:DNA-templated transcription"/>
    <property type="evidence" value="ECO:0007669"/>
    <property type="project" value="UniProtKB-UniRule"/>
</dbReference>
<dbReference type="Gene3D" id="3.90.940.10">
    <property type="match status" value="1"/>
</dbReference>
<dbReference type="HAMAP" id="MF_00366">
    <property type="entry name" value="RNApol_bact_RpoZ"/>
    <property type="match status" value="1"/>
</dbReference>
<dbReference type="InterPro" id="IPR003716">
    <property type="entry name" value="DNA-dir_RNA_pol_omega"/>
</dbReference>
<dbReference type="InterPro" id="IPR006110">
    <property type="entry name" value="Pol_omega/Rpo6/RPB6"/>
</dbReference>
<dbReference type="InterPro" id="IPR036161">
    <property type="entry name" value="RPB6/omega-like_sf"/>
</dbReference>
<dbReference type="NCBIfam" id="NF001579">
    <property type="entry name" value="PRK00392.6-2"/>
    <property type="match status" value="1"/>
</dbReference>
<dbReference type="NCBIfam" id="TIGR00690">
    <property type="entry name" value="rpoZ"/>
    <property type="match status" value="1"/>
</dbReference>
<dbReference type="Pfam" id="PF01192">
    <property type="entry name" value="RNA_pol_Rpb6"/>
    <property type="match status" value="1"/>
</dbReference>
<dbReference type="SMART" id="SM01409">
    <property type="entry name" value="RNA_pol_Rpb6"/>
    <property type="match status" value="1"/>
</dbReference>
<dbReference type="SUPFAM" id="SSF63562">
    <property type="entry name" value="RPB6/omega subunit-like"/>
    <property type="match status" value="1"/>
</dbReference>